<keyword id="KW-0963">Cytoplasm</keyword>
<keyword id="KW-0206">Cytoskeleton</keyword>
<name>AIM21_CANDC</name>
<protein>
    <recommendedName>
        <fullName>Altered inheritance of mitochondria protein 21</fullName>
    </recommendedName>
</protein>
<reference key="1">
    <citation type="journal article" date="2009" name="Genome Res.">
        <title>Comparative genomics of the fungal pathogens Candida dubliniensis and Candida albicans.</title>
        <authorList>
            <person name="Jackson A.P."/>
            <person name="Gamble J.A."/>
            <person name="Yeomans T."/>
            <person name="Moran G.P."/>
            <person name="Saunders D."/>
            <person name="Harris D."/>
            <person name="Aslett M."/>
            <person name="Barrell J.F."/>
            <person name="Butler G."/>
            <person name="Citiulo F."/>
            <person name="Coleman D.C."/>
            <person name="de Groot P.W.J."/>
            <person name="Goodwin T.J."/>
            <person name="Quail M.A."/>
            <person name="McQuillan J."/>
            <person name="Munro C.A."/>
            <person name="Pain A."/>
            <person name="Poulter R.T."/>
            <person name="Rajandream M.A."/>
            <person name="Renauld H."/>
            <person name="Spiering M.J."/>
            <person name="Tivey A."/>
            <person name="Gow N.A.R."/>
            <person name="Barrell B."/>
            <person name="Sullivan D.J."/>
            <person name="Berriman M."/>
        </authorList>
    </citation>
    <scope>NUCLEOTIDE SEQUENCE [LARGE SCALE GENOMIC DNA]</scope>
    <source>
        <strain>CD36 / ATCC MYA-646 / CBS 7987 / NCPF 3949 / NRRL Y-17841</strain>
    </source>
</reference>
<proteinExistence type="inferred from homology"/>
<organism>
    <name type="scientific">Candida dubliniensis (strain CD36 / ATCC MYA-646 / CBS 7987 / NCPF 3949 / NRRL Y-17841)</name>
    <name type="common">Yeast</name>
    <dbReference type="NCBI Taxonomy" id="573826"/>
    <lineage>
        <taxon>Eukaryota</taxon>
        <taxon>Fungi</taxon>
        <taxon>Dikarya</taxon>
        <taxon>Ascomycota</taxon>
        <taxon>Saccharomycotina</taxon>
        <taxon>Pichiomycetes</taxon>
        <taxon>Debaryomycetaceae</taxon>
        <taxon>Candida/Lodderomyces clade</taxon>
        <taxon>Candida</taxon>
    </lineage>
</organism>
<dbReference type="EMBL" id="FM992688">
    <property type="protein sequence ID" value="CAX45248.1"/>
    <property type="molecule type" value="Genomic_DNA"/>
</dbReference>
<dbReference type="RefSeq" id="XP_002417593.1">
    <property type="nucleotide sequence ID" value="XM_002417548.1"/>
</dbReference>
<dbReference type="SMR" id="B9W923"/>
<dbReference type="GeneID" id="8045140"/>
<dbReference type="KEGG" id="cdu:CD36_09490"/>
<dbReference type="CGD" id="CAL0000170653">
    <property type="gene designation" value="Cd36_09490"/>
</dbReference>
<dbReference type="VEuPathDB" id="FungiDB:CD36_09490"/>
<dbReference type="eggNOG" id="ENOG502S25J">
    <property type="taxonomic scope" value="Eukaryota"/>
</dbReference>
<dbReference type="HOGENOM" id="CLU_336152_0_0_1"/>
<dbReference type="OrthoDB" id="4096963at2759"/>
<dbReference type="Proteomes" id="UP000002605">
    <property type="component" value="Chromosome 1"/>
</dbReference>
<dbReference type="GO" id="GO:0030479">
    <property type="term" value="C:actin cortical patch"/>
    <property type="evidence" value="ECO:0007669"/>
    <property type="project" value="UniProtKB-SubCell"/>
</dbReference>
<comment type="function">
    <text evidence="1">Involved in mitochondrial migration along actin filaments.</text>
</comment>
<comment type="subcellular location">
    <subcellularLocation>
        <location evidence="1">Cytoplasm</location>
        <location evidence="1">Cytoskeleton</location>
        <location evidence="1">Actin patch</location>
    </subcellularLocation>
    <text evidence="1">Cortical actin patches.</text>
</comment>
<comment type="similarity">
    <text evidence="3">Belongs to the AIM21 family.</text>
</comment>
<accession>B9W923</accession>
<evidence type="ECO:0000250" key="1"/>
<evidence type="ECO:0000256" key="2">
    <source>
        <dbReference type="SAM" id="MobiDB-lite"/>
    </source>
</evidence>
<evidence type="ECO:0000305" key="3"/>
<gene>
    <name type="primary">AIM21</name>
    <name type="ORF">CD36_09490</name>
</gene>
<sequence>MSDLEPSESLNHESDSHLEQLKPSTTPSIPARPQSRPQKQTTTTTTKVPTDQDSNDKTPLEKPQDELDQLAHEIEKVLTDPVIPPRPQHGSSAKPNETQTEHKEQDFGSAHPVIPSRPTNKKETIETEMVDQNNGLESKSDSTANKESLENQVPIDEDSTHVKPSIPNVPSRPQNRDLDSSEVDNTKASTTPSIPARPQRQTAPTQNEHKPQVSNTPVIPTRPQTKTEKLHLNEELDKLDGESSSKNQENKRHTDDNNTSKPIYEAESIVPPEEKEGETANKQALPTTSTDPPAEPTASTRGFRLPLHMQQSSGPISTSTPVTGSEAELNSLDNSNTFGDGEITPGNSDTKATFKSDEDVENNNRTDSSSFDDDMETISQDQEDREEDRRHRQETTTGENVQESEDPQFETTIIESGEIEERDGDDTDSGELYSEQQQNKEKEDVVPATSTPKIPQRPPKKQSLSRATTDDSLTSLDNTSKPPKPVVPKRPTSEESSSNLEPTIPTRPSIKKAPSIGESDPEPIVPNRPGNKELESIPRDTQTSIKSKPPPPKPKKLSSKIAAFQQQLFNPMNASSEEDVGSTGSKQPEPGIRKRSTENSILSRFGGKAIPLPGMFNPNQMPKPSISHGEETSDDKEEKEEKEENVTANVPVRRTRGPRGKKLPKAVADAEIKTESRFTIESGKLWSLEFKREIKEEKEIGHSDLEKSKILVDDVEADGDGEEKAAENEVIESQENTIGDKLEHNDVVNIASAAADIDNDGDVDDDDDDDVPPEVNERFIKDEEISNVGIERTIASETTTEKHSTDEEVEEEEEELEVDSVDIPIRRVTVNTVDTIEDQKDVDDEPL</sequence>
<feature type="chain" id="PRO_0000399516" description="Altered inheritance of mitochondria protein 21">
    <location>
        <begin position="1"/>
        <end position="847"/>
    </location>
</feature>
<feature type="region of interest" description="Disordered" evidence="2">
    <location>
        <begin position="1"/>
        <end position="665"/>
    </location>
</feature>
<feature type="region of interest" description="Disordered" evidence="2">
    <location>
        <begin position="716"/>
        <end position="775"/>
    </location>
</feature>
<feature type="region of interest" description="Disordered" evidence="2">
    <location>
        <begin position="793"/>
        <end position="821"/>
    </location>
</feature>
<feature type="compositionally biased region" description="Basic and acidic residues" evidence="2">
    <location>
        <begin position="10"/>
        <end position="20"/>
    </location>
</feature>
<feature type="compositionally biased region" description="Basic and acidic residues" evidence="2">
    <location>
        <begin position="54"/>
        <end position="78"/>
    </location>
</feature>
<feature type="compositionally biased region" description="Polar residues" evidence="2">
    <location>
        <begin position="89"/>
        <end position="98"/>
    </location>
</feature>
<feature type="compositionally biased region" description="Polar residues" evidence="2">
    <location>
        <begin position="130"/>
        <end position="146"/>
    </location>
</feature>
<feature type="compositionally biased region" description="Polar residues" evidence="2">
    <location>
        <begin position="186"/>
        <end position="224"/>
    </location>
</feature>
<feature type="compositionally biased region" description="Basic and acidic residues" evidence="2">
    <location>
        <begin position="225"/>
        <end position="258"/>
    </location>
</feature>
<feature type="compositionally biased region" description="Polar residues" evidence="2">
    <location>
        <begin position="280"/>
        <end position="291"/>
    </location>
</feature>
<feature type="compositionally biased region" description="Polar residues" evidence="2">
    <location>
        <begin position="309"/>
        <end position="323"/>
    </location>
</feature>
<feature type="compositionally biased region" description="Acidic residues" evidence="2">
    <location>
        <begin position="370"/>
        <end position="386"/>
    </location>
</feature>
<feature type="compositionally biased region" description="Acidic residues" evidence="2">
    <location>
        <begin position="417"/>
        <end position="429"/>
    </location>
</feature>
<feature type="compositionally biased region" description="Low complexity" evidence="2">
    <location>
        <begin position="464"/>
        <end position="481"/>
    </location>
</feature>
<feature type="compositionally biased region" description="Polar residues" evidence="2">
    <location>
        <begin position="564"/>
        <end position="575"/>
    </location>
</feature>
<feature type="compositionally biased region" description="Acidic residues" evidence="2">
    <location>
        <begin position="632"/>
        <end position="643"/>
    </location>
</feature>
<feature type="compositionally biased region" description="Basic residues" evidence="2">
    <location>
        <begin position="653"/>
        <end position="664"/>
    </location>
</feature>
<feature type="compositionally biased region" description="Low complexity" evidence="2">
    <location>
        <begin position="747"/>
        <end position="756"/>
    </location>
</feature>
<feature type="compositionally biased region" description="Acidic residues" evidence="2">
    <location>
        <begin position="757"/>
        <end position="772"/>
    </location>
</feature>
<feature type="compositionally biased region" description="Acidic residues" evidence="2">
    <location>
        <begin position="807"/>
        <end position="820"/>
    </location>
</feature>